<feature type="chain" id="PRO_1000005322" description="Small ribosomal subunit protein bS6">
    <location>
        <begin position="1"/>
        <end position="131"/>
    </location>
</feature>
<feature type="region of interest" description="Disordered" evidence="2">
    <location>
        <begin position="94"/>
        <end position="131"/>
    </location>
</feature>
<feature type="compositionally biased region" description="Basic and acidic residues" evidence="2">
    <location>
        <begin position="117"/>
        <end position="131"/>
    </location>
</feature>
<comment type="function">
    <text evidence="1">Binds together with bS18 to 16S ribosomal RNA.</text>
</comment>
<comment type="similarity">
    <text evidence="1">Belongs to the bacterial ribosomal protein bS6 family.</text>
</comment>
<organism>
    <name type="scientific">Psychrobacter cryohalolentis (strain ATCC BAA-1226 / DSM 17306 / VKM B-2378 / K5)</name>
    <dbReference type="NCBI Taxonomy" id="335284"/>
    <lineage>
        <taxon>Bacteria</taxon>
        <taxon>Pseudomonadati</taxon>
        <taxon>Pseudomonadota</taxon>
        <taxon>Gammaproteobacteria</taxon>
        <taxon>Moraxellales</taxon>
        <taxon>Moraxellaceae</taxon>
        <taxon>Psychrobacter</taxon>
    </lineage>
</organism>
<sequence>MRHYELVLLVHPDQSDQVVGMVERYIKLVQDNNGTIHRLEDWGRRQLAYPINKIHKAHYVLFNIETDGETLAELEELFRYNDAIIRSLVMRRDDAVTEESQLAKNADEKRARKATTRRPDSNDDNDNHSDD</sequence>
<keyword id="KW-0687">Ribonucleoprotein</keyword>
<keyword id="KW-0689">Ribosomal protein</keyword>
<keyword id="KW-0694">RNA-binding</keyword>
<keyword id="KW-0699">rRNA-binding</keyword>
<protein>
    <recommendedName>
        <fullName evidence="1">Small ribosomal subunit protein bS6</fullName>
    </recommendedName>
    <alternativeName>
        <fullName evidence="3">30S ribosomal protein S6</fullName>
    </alternativeName>
</protein>
<name>RS6_PSYCK</name>
<accession>Q1QBZ0</accession>
<reference key="1">
    <citation type="submission" date="2006-03" db="EMBL/GenBank/DDBJ databases">
        <title>Complete sequence of chromosome of Psychrobacter cryohalolentis K5.</title>
        <authorList>
            <consortium name="US DOE Joint Genome Institute"/>
            <person name="Copeland A."/>
            <person name="Lucas S."/>
            <person name="Lapidus A."/>
            <person name="Barry K."/>
            <person name="Detter J.C."/>
            <person name="Glavina T."/>
            <person name="Hammon N."/>
            <person name="Israni S."/>
            <person name="Dalin E."/>
            <person name="Tice H."/>
            <person name="Pitluck S."/>
            <person name="Brettin T."/>
            <person name="Bruce D."/>
            <person name="Han C."/>
            <person name="Tapia R."/>
            <person name="Sims D.R."/>
            <person name="Gilna P."/>
            <person name="Schmutz J."/>
            <person name="Larimer F."/>
            <person name="Land M."/>
            <person name="Hauser L."/>
            <person name="Kyrpides N."/>
            <person name="Kim E."/>
            <person name="Richardson P."/>
        </authorList>
    </citation>
    <scope>NUCLEOTIDE SEQUENCE [LARGE SCALE GENOMIC DNA]</scope>
    <source>
        <strain>ATCC BAA-1226 / DSM 17306 / VKM B-2378 / K5</strain>
    </source>
</reference>
<gene>
    <name evidence="1" type="primary">rpsF</name>
    <name type="ordered locus">Pcryo_1032</name>
</gene>
<proteinExistence type="inferred from homology"/>
<evidence type="ECO:0000255" key="1">
    <source>
        <dbReference type="HAMAP-Rule" id="MF_00360"/>
    </source>
</evidence>
<evidence type="ECO:0000256" key="2">
    <source>
        <dbReference type="SAM" id="MobiDB-lite"/>
    </source>
</evidence>
<evidence type="ECO:0000305" key="3"/>
<dbReference type="EMBL" id="CP000323">
    <property type="protein sequence ID" value="ABE74813.1"/>
    <property type="molecule type" value="Genomic_DNA"/>
</dbReference>
<dbReference type="RefSeq" id="WP_011513370.1">
    <property type="nucleotide sequence ID" value="NC_007969.1"/>
</dbReference>
<dbReference type="SMR" id="Q1QBZ0"/>
<dbReference type="STRING" id="335284.Pcryo_1032"/>
<dbReference type="KEGG" id="pcr:Pcryo_1032"/>
<dbReference type="eggNOG" id="COG0360">
    <property type="taxonomic scope" value="Bacteria"/>
</dbReference>
<dbReference type="HOGENOM" id="CLU_113441_6_1_6"/>
<dbReference type="Proteomes" id="UP000002425">
    <property type="component" value="Chromosome"/>
</dbReference>
<dbReference type="GO" id="GO:0022627">
    <property type="term" value="C:cytosolic small ribosomal subunit"/>
    <property type="evidence" value="ECO:0007669"/>
    <property type="project" value="TreeGrafter"/>
</dbReference>
<dbReference type="GO" id="GO:0070181">
    <property type="term" value="F:small ribosomal subunit rRNA binding"/>
    <property type="evidence" value="ECO:0007669"/>
    <property type="project" value="TreeGrafter"/>
</dbReference>
<dbReference type="GO" id="GO:0003735">
    <property type="term" value="F:structural constituent of ribosome"/>
    <property type="evidence" value="ECO:0007669"/>
    <property type="project" value="InterPro"/>
</dbReference>
<dbReference type="GO" id="GO:0006412">
    <property type="term" value="P:translation"/>
    <property type="evidence" value="ECO:0007669"/>
    <property type="project" value="UniProtKB-UniRule"/>
</dbReference>
<dbReference type="CDD" id="cd00473">
    <property type="entry name" value="bS6"/>
    <property type="match status" value="1"/>
</dbReference>
<dbReference type="Gene3D" id="3.30.70.60">
    <property type="match status" value="1"/>
</dbReference>
<dbReference type="HAMAP" id="MF_00360">
    <property type="entry name" value="Ribosomal_bS6"/>
    <property type="match status" value="1"/>
</dbReference>
<dbReference type="InterPro" id="IPR000529">
    <property type="entry name" value="Ribosomal_bS6"/>
</dbReference>
<dbReference type="InterPro" id="IPR020815">
    <property type="entry name" value="Ribosomal_bS6_CS"/>
</dbReference>
<dbReference type="InterPro" id="IPR035980">
    <property type="entry name" value="Ribosomal_bS6_sf"/>
</dbReference>
<dbReference type="InterPro" id="IPR020814">
    <property type="entry name" value="Ribosomal_S6_plastid/chlpt"/>
</dbReference>
<dbReference type="InterPro" id="IPR014717">
    <property type="entry name" value="Transl_elong_EF1B/ribsomal_bS6"/>
</dbReference>
<dbReference type="NCBIfam" id="TIGR00166">
    <property type="entry name" value="S6"/>
    <property type="match status" value="1"/>
</dbReference>
<dbReference type="PANTHER" id="PTHR21011">
    <property type="entry name" value="MITOCHONDRIAL 28S RIBOSOMAL PROTEIN S6"/>
    <property type="match status" value="1"/>
</dbReference>
<dbReference type="PANTHER" id="PTHR21011:SF1">
    <property type="entry name" value="SMALL RIBOSOMAL SUBUNIT PROTEIN BS6M"/>
    <property type="match status" value="1"/>
</dbReference>
<dbReference type="Pfam" id="PF01250">
    <property type="entry name" value="Ribosomal_S6"/>
    <property type="match status" value="1"/>
</dbReference>
<dbReference type="SUPFAM" id="SSF54995">
    <property type="entry name" value="Ribosomal protein S6"/>
    <property type="match status" value="1"/>
</dbReference>
<dbReference type="PROSITE" id="PS01048">
    <property type="entry name" value="RIBOSOMAL_S6"/>
    <property type="match status" value="1"/>
</dbReference>